<evidence type="ECO:0000255" key="1"/>
<evidence type="ECO:0000256" key="2">
    <source>
        <dbReference type="SAM" id="MobiDB-lite"/>
    </source>
</evidence>
<sequence length="235" mass="27771">MSFKSDNSNSILKNFKRTIIHPNGTNGEFNNNNNINNNNNNNNNNNNNNNNNNNNNSNNNLPIKRKVPESYSQYQYHQQKQVQKQNSQFHKESELNEMELDVEKEYYEQSKDIIGFKRFRSLDSNNNLNSNQFIENNQKSQFFNNNNNNNNNNNNSNNNKNFDQKDNEQEDIIKYMEFLSDIEQLNSDLKESKDNLESISIEMVLLETRLKGLLGLNTLRIIQNDQEQFLFKNKK</sequence>
<feature type="chain" id="PRO_0000346964" description="Putative uncharacterized protein DDB_G0289009">
    <location>
        <begin position="1"/>
        <end position="235"/>
    </location>
</feature>
<feature type="region of interest" description="Disordered" evidence="2">
    <location>
        <begin position="20"/>
        <end position="64"/>
    </location>
</feature>
<feature type="region of interest" description="Disordered" evidence="2">
    <location>
        <begin position="140"/>
        <end position="164"/>
    </location>
</feature>
<feature type="coiled-coil region" evidence="1">
    <location>
        <begin position="174"/>
        <end position="213"/>
    </location>
</feature>
<feature type="compositionally biased region" description="Low complexity" evidence="2">
    <location>
        <begin position="30"/>
        <end position="60"/>
    </location>
</feature>
<feature type="compositionally biased region" description="Low complexity" evidence="2">
    <location>
        <begin position="140"/>
        <end position="161"/>
    </location>
</feature>
<protein>
    <recommendedName>
        <fullName>Putative uncharacterized protein DDB_G0289009</fullName>
    </recommendedName>
</protein>
<dbReference type="EMBL" id="AAFI02000129">
    <property type="protein sequence ID" value="EAL62920.1"/>
    <property type="molecule type" value="Genomic_DNA"/>
</dbReference>
<dbReference type="RefSeq" id="XP_636420.1">
    <property type="nucleotide sequence ID" value="XM_631328.1"/>
</dbReference>
<dbReference type="SMR" id="Q54I51"/>
<dbReference type="PaxDb" id="44689-DDB0188207"/>
<dbReference type="EnsemblProtists" id="EAL62920">
    <property type="protein sequence ID" value="EAL62920"/>
    <property type="gene ID" value="DDB_G0289009"/>
</dbReference>
<dbReference type="GeneID" id="8626911"/>
<dbReference type="KEGG" id="ddi:DDB_G0289009"/>
<dbReference type="dictyBase" id="DDB_G0289009"/>
<dbReference type="VEuPathDB" id="AmoebaDB:DDB_G0289009"/>
<dbReference type="eggNOG" id="ENOG502RINN">
    <property type="taxonomic scope" value="Eukaryota"/>
</dbReference>
<dbReference type="HOGENOM" id="CLU_1182022_0_0_1"/>
<dbReference type="InParanoid" id="Q54I51"/>
<dbReference type="PRO" id="PR:Q54I51"/>
<dbReference type="Proteomes" id="UP000002195">
    <property type="component" value="Chromosome 5"/>
</dbReference>
<proteinExistence type="predicted"/>
<name>Y8207_DICDI</name>
<keyword id="KW-0175">Coiled coil</keyword>
<keyword id="KW-1185">Reference proteome</keyword>
<organism>
    <name type="scientific">Dictyostelium discoideum</name>
    <name type="common">Social amoeba</name>
    <dbReference type="NCBI Taxonomy" id="44689"/>
    <lineage>
        <taxon>Eukaryota</taxon>
        <taxon>Amoebozoa</taxon>
        <taxon>Evosea</taxon>
        <taxon>Eumycetozoa</taxon>
        <taxon>Dictyostelia</taxon>
        <taxon>Dictyosteliales</taxon>
        <taxon>Dictyosteliaceae</taxon>
        <taxon>Dictyostelium</taxon>
    </lineage>
</organism>
<accession>Q54I51</accession>
<gene>
    <name type="ORF">DDB_G0289009</name>
</gene>
<reference key="1">
    <citation type="journal article" date="2005" name="Nature">
        <title>The genome of the social amoeba Dictyostelium discoideum.</title>
        <authorList>
            <person name="Eichinger L."/>
            <person name="Pachebat J.A."/>
            <person name="Gloeckner G."/>
            <person name="Rajandream M.A."/>
            <person name="Sucgang R."/>
            <person name="Berriman M."/>
            <person name="Song J."/>
            <person name="Olsen R."/>
            <person name="Szafranski K."/>
            <person name="Xu Q."/>
            <person name="Tunggal B."/>
            <person name="Kummerfeld S."/>
            <person name="Madera M."/>
            <person name="Konfortov B.A."/>
            <person name="Rivero F."/>
            <person name="Bankier A.T."/>
            <person name="Lehmann R."/>
            <person name="Hamlin N."/>
            <person name="Davies R."/>
            <person name="Gaudet P."/>
            <person name="Fey P."/>
            <person name="Pilcher K."/>
            <person name="Chen G."/>
            <person name="Saunders D."/>
            <person name="Sodergren E.J."/>
            <person name="Davis P."/>
            <person name="Kerhornou A."/>
            <person name="Nie X."/>
            <person name="Hall N."/>
            <person name="Anjard C."/>
            <person name="Hemphill L."/>
            <person name="Bason N."/>
            <person name="Farbrother P."/>
            <person name="Desany B."/>
            <person name="Just E."/>
            <person name="Morio T."/>
            <person name="Rost R."/>
            <person name="Churcher C.M."/>
            <person name="Cooper J."/>
            <person name="Haydock S."/>
            <person name="van Driessche N."/>
            <person name="Cronin A."/>
            <person name="Goodhead I."/>
            <person name="Muzny D.M."/>
            <person name="Mourier T."/>
            <person name="Pain A."/>
            <person name="Lu M."/>
            <person name="Harper D."/>
            <person name="Lindsay R."/>
            <person name="Hauser H."/>
            <person name="James K.D."/>
            <person name="Quiles M."/>
            <person name="Madan Babu M."/>
            <person name="Saito T."/>
            <person name="Buchrieser C."/>
            <person name="Wardroper A."/>
            <person name="Felder M."/>
            <person name="Thangavelu M."/>
            <person name="Johnson D."/>
            <person name="Knights A."/>
            <person name="Loulseged H."/>
            <person name="Mungall K.L."/>
            <person name="Oliver K."/>
            <person name="Price C."/>
            <person name="Quail M.A."/>
            <person name="Urushihara H."/>
            <person name="Hernandez J."/>
            <person name="Rabbinowitsch E."/>
            <person name="Steffen D."/>
            <person name="Sanders M."/>
            <person name="Ma J."/>
            <person name="Kohara Y."/>
            <person name="Sharp S."/>
            <person name="Simmonds M.N."/>
            <person name="Spiegler S."/>
            <person name="Tivey A."/>
            <person name="Sugano S."/>
            <person name="White B."/>
            <person name="Walker D."/>
            <person name="Woodward J.R."/>
            <person name="Winckler T."/>
            <person name="Tanaka Y."/>
            <person name="Shaulsky G."/>
            <person name="Schleicher M."/>
            <person name="Weinstock G.M."/>
            <person name="Rosenthal A."/>
            <person name="Cox E.C."/>
            <person name="Chisholm R.L."/>
            <person name="Gibbs R.A."/>
            <person name="Loomis W.F."/>
            <person name="Platzer M."/>
            <person name="Kay R.R."/>
            <person name="Williams J.G."/>
            <person name="Dear P.H."/>
            <person name="Noegel A.A."/>
            <person name="Barrell B.G."/>
            <person name="Kuspa A."/>
        </authorList>
    </citation>
    <scope>NUCLEOTIDE SEQUENCE [LARGE SCALE GENOMIC DNA]</scope>
    <source>
        <strain>AX4</strain>
    </source>
</reference>